<protein>
    <recommendedName>
        <fullName evidence="1">UDP-N-acetylglucosamine 1-carboxyvinyltransferase</fullName>
        <ecNumber evidence="1">2.5.1.7</ecNumber>
    </recommendedName>
    <alternativeName>
        <fullName evidence="1">Enoylpyruvate transferase</fullName>
    </alternativeName>
    <alternativeName>
        <fullName evidence="1">UDP-N-acetylglucosamine enolpyruvyl transferase</fullName>
        <shortName evidence="1">EPT</shortName>
    </alternativeName>
</protein>
<evidence type="ECO:0000255" key="1">
    <source>
        <dbReference type="HAMAP-Rule" id="MF_00111"/>
    </source>
</evidence>
<accession>Q726D3</accession>
<organism>
    <name type="scientific">Nitratidesulfovibrio vulgaris (strain ATCC 29579 / DSM 644 / CCUG 34227 / NCIMB 8303 / VKM B-1760 / Hildenborough)</name>
    <name type="common">Desulfovibrio vulgaris</name>
    <dbReference type="NCBI Taxonomy" id="882"/>
    <lineage>
        <taxon>Bacteria</taxon>
        <taxon>Pseudomonadati</taxon>
        <taxon>Thermodesulfobacteriota</taxon>
        <taxon>Desulfovibrionia</taxon>
        <taxon>Desulfovibrionales</taxon>
        <taxon>Desulfovibrionaceae</taxon>
        <taxon>Nitratidesulfovibrio</taxon>
    </lineage>
</organism>
<feature type="chain" id="PRO_0000231201" description="UDP-N-acetylglucosamine 1-carboxyvinyltransferase">
    <location>
        <begin position="1"/>
        <end position="417"/>
    </location>
</feature>
<feature type="active site" description="Proton donor" evidence="1">
    <location>
        <position position="115"/>
    </location>
</feature>
<feature type="binding site" evidence="1">
    <location>
        <begin position="22"/>
        <end position="23"/>
    </location>
    <ligand>
        <name>phosphoenolpyruvate</name>
        <dbReference type="ChEBI" id="CHEBI:58702"/>
    </ligand>
</feature>
<feature type="binding site" evidence="1">
    <location>
        <position position="91"/>
    </location>
    <ligand>
        <name>UDP-N-acetyl-alpha-D-glucosamine</name>
        <dbReference type="ChEBI" id="CHEBI:57705"/>
    </ligand>
</feature>
<feature type="binding site" evidence="1">
    <location>
        <begin position="120"/>
        <end position="124"/>
    </location>
    <ligand>
        <name>UDP-N-acetyl-alpha-D-glucosamine</name>
        <dbReference type="ChEBI" id="CHEBI:57705"/>
    </ligand>
</feature>
<feature type="binding site" evidence="1">
    <location>
        <position position="304"/>
    </location>
    <ligand>
        <name>UDP-N-acetyl-alpha-D-glucosamine</name>
        <dbReference type="ChEBI" id="CHEBI:57705"/>
    </ligand>
</feature>
<feature type="binding site" evidence="1">
    <location>
        <position position="326"/>
    </location>
    <ligand>
        <name>UDP-N-acetyl-alpha-D-glucosamine</name>
        <dbReference type="ChEBI" id="CHEBI:57705"/>
    </ligand>
</feature>
<feature type="modified residue" description="2-(S-cysteinyl)pyruvic acid O-phosphothioketal" evidence="1">
    <location>
        <position position="115"/>
    </location>
</feature>
<name>MURA_NITV2</name>
<keyword id="KW-0131">Cell cycle</keyword>
<keyword id="KW-0132">Cell division</keyword>
<keyword id="KW-0133">Cell shape</keyword>
<keyword id="KW-0961">Cell wall biogenesis/degradation</keyword>
<keyword id="KW-0963">Cytoplasm</keyword>
<keyword id="KW-0573">Peptidoglycan synthesis</keyword>
<keyword id="KW-0670">Pyruvate</keyword>
<keyword id="KW-1185">Reference proteome</keyword>
<keyword id="KW-0808">Transferase</keyword>
<sequence length="417" mass="44823">MDKLVIEGGVPLTGTINVSGSKNAALPILMASILAEEPVTYTNVPRLRDIHTTNKLLSILGCPAEFEGDTVSVRPCDLKPEAPYDLVKTMRASVLCLGPLLARLGEARVALPGGCAIGARPVDLHLTALEKMGARFELEEGYIIGRCRKLKGAHIYFDFPTVGGTENLLMAATLAEGETILENAAREPEVVDLARFLIACGAKIEGHGTSVIRVQGVPRLHGCEYAIMPDRIEAGTFLVAAGITGGELLLTGCPWEELDAVIVKLNAMGMHIEKTSEGVLAKRRNGGLRGTDVTTQPFPGFPTDMQAQVMSLMCLAEGTSVVQENIFENRFMHVLELVRMGADIRISGRSAVVRGVKRLTGAPVMASDLRASASLVLAGLAARGTTHVQRIYHLDRGYERIELKLNAVGARIRREAE</sequence>
<proteinExistence type="inferred from homology"/>
<dbReference type="EC" id="2.5.1.7" evidence="1"/>
<dbReference type="EMBL" id="AE017285">
    <property type="protein sequence ID" value="AAS97728.1"/>
    <property type="molecule type" value="Genomic_DNA"/>
</dbReference>
<dbReference type="RefSeq" id="WP_010940516.1">
    <property type="nucleotide sequence ID" value="NC_002937.3"/>
</dbReference>
<dbReference type="RefSeq" id="YP_012468.1">
    <property type="nucleotide sequence ID" value="NC_002937.3"/>
</dbReference>
<dbReference type="SMR" id="Q726D3"/>
<dbReference type="STRING" id="882.DVU_3258"/>
<dbReference type="PaxDb" id="882-DVU_3258"/>
<dbReference type="EnsemblBacteria" id="AAS97728">
    <property type="protein sequence ID" value="AAS97728"/>
    <property type="gene ID" value="DVU_3258"/>
</dbReference>
<dbReference type="KEGG" id="dvu:DVU_3258"/>
<dbReference type="PATRIC" id="fig|882.5.peg.2963"/>
<dbReference type="eggNOG" id="COG0766">
    <property type="taxonomic scope" value="Bacteria"/>
</dbReference>
<dbReference type="HOGENOM" id="CLU_027387_0_0_7"/>
<dbReference type="OrthoDB" id="9803760at2"/>
<dbReference type="PhylomeDB" id="Q726D3"/>
<dbReference type="UniPathway" id="UPA00219"/>
<dbReference type="Proteomes" id="UP000002194">
    <property type="component" value="Chromosome"/>
</dbReference>
<dbReference type="GO" id="GO:0005737">
    <property type="term" value="C:cytoplasm"/>
    <property type="evidence" value="ECO:0007669"/>
    <property type="project" value="UniProtKB-SubCell"/>
</dbReference>
<dbReference type="GO" id="GO:0008760">
    <property type="term" value="F:UDP-N-acetylglucosamine 1-carboxyvinyltransferase activity"/>
    <property type="evidence" value="ECO:0007669"/>
    <property type="project" value="UniProtKB-UniRule"/>
</dbReference>
<dbReference type="GO" id="GO:0051301">
    <property type="term" value="P:cell division"/>
    <property type="evidence" value="ECO:0007669"/>
    <property type="project" value="UniProtKB-KW"/>
</dbReference>
<dbReference type="GO" id="GO:0071555">
    <property type="term" value="P:cell wall organization"/>
    <property type="evidence" value="ECO:0007669"/>
    <property type="project" value="UniProtKB-KW"/>
</dbReference>
<dbReference type="GO" id="GO:0009252">
    <property type="term" value="P:peptidoglycan biosynthetic process"/>
    <property type="evidence" value="ECO:0007669"/>
    <property type="project" value="UniProtKB-UniRule"/>
</dbReference>
<dbReference type="GO" id="GO:0008360">
    <property type="term" value="P:regulation of cell shape"/>
    <property type="evidence" value="ECO:0007669"/>
    <property type="project" value="UniProtKB-KW"/>
</dbReference>
<dbReference type="GO" id="GO:0019277">
    <property type="term" value="P:UDP-N-acetylgalactosamine biosynthetic process"/>
    <property type="evidence" value="ECO:0007669"/>
    <property type="project" value="InterPro"/>
</dbReference>
<dbReference type="CDD" id="cd01555">
    <property type="entry name" value="UdpNAET"/>
    <property type="match status" value="1"/>
</dbReference>
<dbReference type="FunFam" id="3.65.10.10:FF:000001">
    <property type="entry name" value="UDP-N-acetylglucosamine 1-carboxyvinyltransferase"/>
    <property type="match status" value="1"/>
</dbReference>
<dbReference type="Gene3D" id="3.65.10.10">
    <property type="entry name" value="Enolpyruvate transferase domain"/>
    <property type="match status" value="2"/>
</dbReference>
<dbReference type="HAMAP" id="MF_00111">
    <property type="entry name" value="MurA"/>
    <property type="match status" value="1"/>
</dbReference>
<dbReference type="InterPro" id="IPR001986">
    <property type="entry name" value="Enolpyruvate_Tfrase_dom"/>
</dbReference>
<dbReference type="InterPro" id="IPR036968">
    <property type="entry name" value="Enolpyruvate_Tfrase_sf"/>
</dbReference>
<dbReference type="InterPro" id="IPR050068">
    <property type="entry name" value="MurA_subfamily"/>
</dbReference>
<dbReference type="InterPro" id="IPR013792">
    <property type="entry name" value="RNA3'P_cycl/enolpyr_Trfase_a/b"/>
</dbReference>
<dbReference type="InterPro" id="IPR005750">
    <property type="entry name" value="UDP_GlcNAc_COvinyl_MurA"/>
</dbReference>
<dbReference type="NCBIfam" id="TIGR01072">
    <property type="entry name" value="murA"/>
    <property type="match status" value="1"/>
</dbReference>
<dbReference type="NCBIfam" id="NF006873">
    <property type="entry name" value="PRK09369.1"/>
    <property type="match status" value="1"/>
</dbReference>
<dbReference type="PANTHER" id="PTHR43783">
    <property type="entry name" value="UDP-N-ACETYLGLUCOSAMINE 1-CARBOXYVINYLTRANSFERASE"/>
    <property type="match status" value="1"/>
</dbReference>
<dbReference type="PANTHER" id="PTHR43783:SF1">
    <property type="entry name" value="UDP-N-ACETYLGLUCOSAMINE 1-CARBOXYVINYLTRANSFERASE"/>
    <property type="match status" value="1"/>
</dbReference>
<dbReference type="Pfam" id="PF00275">
    <property type="entry name" value="EPSP_synthase"/>
    <property type="match status" value="1"/>
</dbReference>
<dbReference type="SUPFAM" id="SSF55205">
    <property type="entry name" value="EPT/RTPC-like"/>
    <property type="match status" value="1"/>
</dbReference>
<gene>
    <name evidence="1" type="primary">murA</name>
    <name type="ordered locus">DVU_3258</name>
</gene>
<comment type="function">
    <text evidence="1">Cell wall formation. Adds enolpyruvyl to UDP-N-acetylglucosamine.</text>
</comment>
<comment type="catalytic activity">
    <reaction evidence="1">
        <text>phosphoenolpyruvate + UDP-N-acetyl-alpha-D-glucosamine = UDP-N-acetyl-3-O-(1-carboxyvinyl)-alpha-D-glucosamine + phosphate</text>
        <dbReference type="Rhea" id="RHEA:18681"/>
        <dbReference type="ChEBI" id="CHEBI:43474"/>
        <dbReference type="ChEBI" id="CHEBI:57705"/>
        <dbReference type="ChEBI" id="CHEBI:58702"/>
        <dbReference type="ChEBI" id="CHEBI:68483"/>
        <dbReference type="EC" id="2.5.1.7"/>
    </reaction>
</comment>
<comment type="pathway">
    <text evidence="1">Cell wall biogenesis; peptidoglycan biosynthesis.</text>
</comment>
<comment type="subcellular location">
    <subcellularLocation>
        <location evidence="1">Cytoplasm</location>
    </subcellularLocation>
</comment>
<comment type="similarity">
    <text evidence="1">Belongs to the EPSP synthase family. MurA subfamily.</text>
</comment>
<reference key="1">
    <citation type="journal article" date="2004" name="Nat. Biotechnol.">
        <title>The genome sequence of the anaerobic, sulfate-reducing bacterium Desulfovibrio vulgaris Hildenborough.</title>
        <authorList>
            <person name="Heidelberg J.F."/>
            <person name="Seshadri R."/>
            <person name="Haveman S.A."/>
            <person name="Hemme C.L."/>
            <person name="Paulsen I.T."/>
            <person name="Kolonay J.F."/>
            <person name="Eisen J.A."/>
            <person name="Ward N.L."/>
            <person name="Methe B.A."/>
            <person name="Brinkac L.M."/>
            <person name="Daugherty S.C."/>
            <person name="DeBoy R.T."/>
            <person name="Dodson R.J."/>
            <person name="Durkin A.S."/>
            <person name="Madupu R."/>
            <person name="Nelson W.C."/>
            <person name="Sullivan S.A."/>
            <person name="Fouts D.E."/>
            <person name="Haft D.H."/>
            <person name="Selengut J."/>
            <person name="Peterson J.D."/>
            <person name="Davidsen T.M."/>
            <person name="Zafar N."/>
            <person name="Zhou L."/>
            <person name="Radune D."/>
            <person name="Dimitrov G."/>
            <person name="Hance M."/>
            <person name="Tran K."/>
            <person name="Khouri H.M."/>
            <person name="Gill J."/>
            <person name="Utterback T.R."/>
            <person name="Feldblyum T.V."/>
            <person name="Wall J.D."/>
            <person name="Voordouw G."/>
            <person name="Fraser C.M."/>
        </authorList>
    </citation>
    <scope>NUCLEOTIDE SEQUENCE [LARGE SCALE GENOMIC DNA]</scope>
    <source>
        <strain>ATCC 29579 / DSM 644 / CCUG 34227 / NCIMB 8303 / VKM B-1760 / Hildenborough</strain>
    </source>
</reference>